<feature type="chain" id="PRO_1000077204" description="Serine--tRNA ligase">
    <location>
        <begin position="1"/>
        <end position="422"/>
    </location>
</feature>
<feature type="binding site" evidence="1">
    <location>
        <begin position="230"/>
        <end position="232"/>
    </location>
    <ligand>
        <name>L-serine</name>
        <dbReference type="ChEBI" id="CHEBI:33384"/>
    </ligand>
</feature>
<feature type="binding site" evidence="1">
    <location>
        <begin position="261"/>
        <end position="263"/>
    </location>
    <ligand>
        <name>ATP</name>
        <dbReference type="ChEBI" id="CHEBI:30616"/>
    </ligand>
</feature>
<feature type="binding site" evidence="1">
    <location>
        <position position="284"/>
    </location>
    <ligand>
        <name>L-serine</name>
        <dbReference type="ChEBI" id="CHEBI:33384"/>
    </ligand>
</feature>
<feature type="binding site" evidence="1">
    <location>
        <begin position="348"/>
        <end position="351"/>
    </location>
    <ligand>
        <name>ATP</name>
        <dbReference type="ChEBI" id="CHEBI:30616"/>
    </ligand>
</feature>
<feature type="binding site" evidence="1">
    <location>
        <position position="383"/>
    </location>
    <ligand>
        <name>L-serine</name>
        <dbReference type="ChEBI" id="CHEBI:33384"/>
    </ligand>
</feature>
<keyword id="KW-0030">Aminoacyl-tRNA synthetase</keyword>
<keyword id="KW-0067">ATP-binding</keyword>
<keyword id="KW-0963">Cytoplasm</keyword>
<keyword id="KW-0436">Ligase</keyword>
<keyword id="KW-0547">Nucleotide-binding</keyword>
<keyword id="KW-0648">Protein biosynthesis</keyword>
<keyword id="KW-1185">Reference proteome</keyword>
<gene>
    <name evidence="1" type="primary">serS</name>
    <name type="ordered locus">PTH_0013</name>
</gene>
<reference key="1">
    <citation type="journal article" date="2008" name="Genome Res.">
        <title>The genome of Pelotomaculum thermopropionicum reveals niche-associated evolution in anaerobic microbiota.</title>
        <authorList>
            <person name="Kosaka T."/>
            <person name="Kato S."/>
            <person name="Shimoyama T."/>
            <person name="Ishii S."/>
            <person name="Abe T."/>
            <person name="Watanabe K."/>
        </authorList>
    </citation>
    <scope>NUCLEOTIDE SEQUENCE [LARGE SCALE GENOMIC DNA]</scope>
    <source>
        <strain>DSM 13744 / JCM 10971 / SI</strain>
    </source>
</reference>
<accession>A5D6D5</accession>
<proteinExistence type="inferred from homology"/>
<comment type="function">
    <text evidence="1">Catalyzes the attachment of serine to tRNA(Ser). Is also able to aminoacylate tRNA(Sec) with serine, to form the misacylated tRNA L-seryl-tRNA(Sec), which will be further converted into selenocysteinyl-tRNA(Sec).</text>
</comment>
<comment type="catalytic activity">
    <reaction evidence="1">
        <text>tRNA(Ser) + L-serine + ATP = L-seryl-tRNA(Ser) + AMP + diphosphate + H(+)</text>
        <dbReference type="Rhea" id="RHEA:12292"/>
        <dbReference type="Rhea" id="RHEA-COMP:9669"/>
        <dbReference type="Rhea" id="RHEA-COMP:9703"/>
        <dbReference type="ChEBI" id="CHEBI:15378"/>
        <dbReference type="ChEBI" id="CHEBI:30616"/>
        <dbReference type="ChEBI" id="CHEBI:33019"/>
        <dbReference type="ChEBI" id="CHEBI:33384"/>
        <dbReference type="ChEBI" id="CHEBI:78442"/>
        <dbReference type="ChEBI" id="CHEBI:78533"/>
        <dbReference type="ChEBI" id="CHEBI:456215"/>
        <dbReference type="EC" id="6.1.1.11"/>
    </reaction>
</comment>
<comment type="catalytic activity">
    <reaction evidence="1">
        <text>tRNA(Sec) + L-serine + ATP = L-seryl-tRNA(Sec) + AMP + diphosphate + H(+)</text>
        <dbReference type="Rhea" id="RHEA:42580"/>
        <dbReference type="Rhea" id="RHEA-COMP:9742"/>
        <dbReference type="Rhea" id="RHEA-COMP:10128"/>
        <dbReference type="ChEBI" id="CHEBI:15378"/>
        <dbReference type="ChEBI" id="CHEBI:30616"/>
        <dbReference type="ChEBI" id="CHEBI:33019"/>
        <dbReference type="ChEBI" id="CHEBI:33384"/>
        <dbReference type="ChEBI" id="CHEBI:78442"/>
        <dbReference type="ChEBI" id="CHEBI:78533"/>
        <dbReference type="ChEBI" id="CHEBI:456215"/>
        <dbReference type="EC" id="6.1.1.11"/>
    </reaction>
</comment>
<comment type="pathway">
    <text evidence="1">Aminoacyl-tRNA biosynthesis; selenocysteinyl-tRNA(Sec) biosynthesis; L-seryl-tRNA(Sec) from L-serine and tRNA(Sec): step 1/1.</text>
</comment>
<comment type="subunit">
    <text evidence="1">Homodimer. The tRNA molecule binds across the dimer.</text>
</comment>
<comment type="subcellular location">
    <subcellularLocation>
        <location evidence="1">Cytoplasm</location>
    </subcellularLocation>
</comment>
<comment type="domain">
    <text evidence="1">Consists of two distinct domains, a catalytic core and a N-terminal extension that is involved in tRNA binding.</text>
</comment>
<comment type="similarity">
    <text evidence="1">Belongs to the class-II aminoacyl-tRNA synthetase family. Type-1 seryl-tRNA synthetase subfamily.</text>
</comment>
<dbReference type="EC" id="6.1.1.11" evidence="1"/>
<dbReference type="EMBL" id="AP009389">
    <property type="protein sequence ID" value="BAF58194.1"/>
    <property type="molecule type" value="Genomic_DNA"/>
</dbReference>
<dbReference type="SMR" id="A5D6D5"/>
<dbReference type="STRING" id="370438.PTH_0013"/>
<dbReference type="KEGG" id="pth:PTH_0013"/>
<dbReference type="eggNOG" id="COG0172">
    <property type="taxonomic scope" value="Bacteria"/>
</dbReference>
<dbReference type="HOGENOM" id="CLU_023797_1_1_9"/>
<dbReference type="UniPathway" id="UPA00906">
    <property type="reaction ID" value="UER00895"/>
</dbReference>
<dbReference type="Proteomes" id="UP000006556">
    <property type="component" value="Chromosome"/>
</dbReference>
<dbReference type="GO" id="GO:0005737">
    <property type="term" value="C:cytoplasm"/>
    <property type="evidence" value="ECO:0007669"/>
    <property type="project" value="UniProtKB-SubCell"/>
</dbReference>
<dbReference type="GO" id="GO:0005524">
    <property type="term" value="F:ATP binding"/>
    <property type="evidence" value="ECO:0007669"/>
    <property type="project" value="UniProtKB-UniRule"/>
</dbReference>
<dbReference type="GO" id="GO:0140096">
    <property type="term" value="F:catalytic activity, acting on a protein"/>
    <property type="evidence" value="ECO:0007669"/>
    <property type="project" value="UniProtKB-ARBA"/>
</dbReference>
<dbReference type="GO" id="GO:0004828">
    <property type="term" value="F:serine-tRNA ligase activity"/>
    <property type="evidence" value="ECO:0007669"/>
    <property type="project" value="UniProtKB-UniRule"/>
</dbReference>
<dbReference type="GO" id="GO:0016740">
    <property type="term" value="F:transferase activity"/>
    <property type="evidence" value="ECO:0007669"/>
    <property type="project" value="UniProtKB-ARBA"/>
</dbReference>
<dbReference type="GO" id="GO:0016260">
    <property type="term" value="P:selenocysteine biosynthetic process"/>
    <property type="evidence" value="ECO:0007669"/>
    <property type="project" value="UniProtKB-UniRule"/>
</dbReference>
<dbReference type="GO" id="GO:0006434">
    <property type="term" value="P:seryl-tRNA aminoacylation"/>
    <property type="evidence" value="ECO:0007669"/>
    <property type="project" value="UniProtKB-UniRule"/>
</dbReference>
<dbReference type="CDD" id="cd00770">
    <property type="entry name" value="SerRS_core"/>
    <property type="match status" value="1"/>
</dbReference>
<dbReference type="Gene3D" id="3.30.930.10">
    <property type="entry name" value="Bira Bifunctional Protein, Domain 2"/>
    <property type="match status" value="1"/>
</dbReference>
<dbReference type="Gene3D" id="1.10.287.40">
    <property type="entry name" value="Serine-tRNA synthetase, tRNA binding domain"/>
    <property type="match status" value="1"/>
</dbReference>
<dbReference type="HAMAP" id="MF_00176">
    <property type="entry name" value="Ser_tRNA_synth_type1"/>
    <property type="match status" value="1"/>
</dbReference>
<dbReference type="InterPro" id="IPR002314">
    <property type="entry name" value="aa-tRNA-synt_IIb"/>
</dbReference>
<dbReference type="InterPro" id="IPR006195">
    <property type="entry name" value="aa-tRNA-synth_II"/>
</dbReference>
<dbReference type="InterPro" id="IPR045864">
    <property type="entry name" value="aa-tRNA-synth_II/BPL/LPL"/>
</dbReference>
<dbReference type="InterPro" id="IPR002317">
    <property type="entry name" value="Ser-tRNA-ligase_type_1"/>
</dbReference>
<dbReference type="InterPro" id="IPR015866">
    <property type="entry name" value="Ser-tRNA-synth_1_N"/>
</dbReference>
<dbReference type="InterPro" id="IPR042103">
    <property type="entry name" value="SerRS_1_N_sf"/>
</dbReference>
<dbReference type="InterPro" id="IPR033729">
    <property type="entry name" value="SerRS_core"/>
</dbReference>
<dbReference type="InterPro" id="IPR010978">
    <property type="entry name" value="tRNA-bd_arm"/>
</dbReference>
<dbReference type="NCBIfam" id="TIGR00414">
    <property type="entry name" value="serS"/>
    <property type="match status" value="1"/>
</dbReference>
<dbReference type="PANTHER" id="PTHR43697:SF1">
    <property type="entry name" value="SERINE--TRNA LIGASE"/>
    <property type="match status" value="1"/>
</dbReference>
<dbReference type="PANTHER" id="PTHR43697">
    <property type="entry name" value="SERYL-TRNA SYNTHETASE"/>
    <property type="match status" value="1"/>
</dbReference>
<dbReference type="Pfam" id="PF02403">
    <property type="entry name" value="Seryl_tRNA_N"/>
    <property type="match status" value="1"/>
</dbReference>
<dbReference type="Pfam" id="PF00587">
    <property type="entry name" value="tRNA-synt_2b"/>
    <property type="match status" value="1"/>
</dbReference>
<dbReference type="PIRSF" id="PIRSF001529">
    <property type="entry name" value="Ser-tRNA-synth_IIa"/>
    <property type="match status" value="1"/>
</dbReference>
<dbReference type="PRINTS" id="PR00981">
    <property type="entry name" value="TRNASYNTHSER"/>
</dbReference>
<dbReference type="SUPFAM" id="SSF55681">
    <property type="entry name" value="Class II aaRS and biotin synthetases"/>
    <property type="match status" value="1"/>
</dbReference>
<dbReference type="SUPFAM" id="SSF46589">
    <property type="entry name" value="tRNA-binding arm"/>
    <property type="match status" value="1"/>
</dbReference>
<dbReference type="PROSITE" id="PS50862">
    <property type="entry name" value="AA_TRNA_LIGASE_II"/>
    <property type="match status" value="1"/>
</dbReference>
<organism>
    <name type="scientific">Pelotomaculum thermopropionicum (strain DSM 13744 / JCM 10971 / SI)</name>
    <dbReference type="NCBI Taxonomy" id="370438"/>
    <lineage>
        <taxon>Bacteria</taxon>
        <taxon>Bacillati</taxon>
        <taxon>Bacillota</taxon>
        <taxon>Clostridia</taxon>
        <taxon>Eubacteriales</taxon>
        <taxon>Desulfotomaculaceae</taxon>
        <taxon>Pelotomaculum</taxon>
    </lineage>
</organism>
<name>SYS_PELTS</name>
<protein>
    <recommendedName>
        <fullName evidence="1">Serine--tRNA ligase</fullName>
        <ecNumber evidence="1">6.1.1.11</ecNumber>
    </recommendedName>
    <alternativeName>
        <fullName evidence="1">Seryl-tRNA synthetase</fullName>
        <shortName evidence="1">SerRS</shortName>
    </alternativeName>
    <alternativeName>
        <fullName evidence="1">Seryl-tRNA(Ser/Sec) synthetase</fullName>
    </alternativeName>
</protein>
<evidence type="ECO:0000255" key="1">
    <source>
        <dbReference type="HAMAP-Rule" id="MF_00176"/>
    </source>
</evidence>
<sequence length="422" mass="47708">MLDMKFVRNNPAAVRDALARRGVSVALDEFYKLDEERREKLFIVEQMKNRRNVVSEEIGRLKKSGKDAPEMVLEMRDLSRQIKEIDEEIKELDGRLQDMLLNIPNIPHESVPEGAGAAENPVVRTWGKPRDFGFTPRPHWEIGEQLDIIDFERGGKVAGARFSFYKGYGARLERAVINFMLDLHTAEHGYVEIFPPFIVNRDSMVGTGQLPKFAEDMFKLEGAEYYLIPTAEVPVTNLYRNEILDGEKLPILHCAYSACFRAEAGAAGRDTRGLIRQHQFNKVELVKFCRPEDSYDELEKLTADAEKVLQKLGLPYRVVVLCTGDLGFSAAKTYDLEVWLPSYQEYKEISSCSNFADFQARRAGIRFRNARGKTEFVHTLNGSGLAVGRTVAAILENYQEADGSVTVPEALRPYMGGLSRIG</sequence>